<evidence type="ECO:0000255" key="1">
    <source>
        <dbReference type="HAMAP-Rule" id="MF_01023"/>
    </source>
</evidence>
<reference key="1">
    <citation type="submission" date="2008-06" db="EMBL/GenBank/DDBJ databases">
        <title>Complete sequence of chromosome of Prosthecochloris aestuarii DSM 271.</title>
        <authorList>
            <consortium name="US DOE Joint Genome Institute"/>
            <person name="Lucas S."/>
            <person name="Copeland A."/>
            <person name="Lapidus A."/>
            <person name="Glavina del Rio T."/>
            <person name="Dalin E."/>
            <person name="Tice H."/>
            <person name="Bruce D."/>
            <person name="Goodwin L."/>
            <person name="Pitluck S."/>
            <person name="Schmutz J."/>
            <person name="Larimer F."/>
            <person name="Land M."/>
            <person name="Hauser L."/>
            <person name="Kyrpides N."/>
            <person name="Anderson I."/>
            <person name="Liu Z."/>
            <person name="Li T."/>
            <person name="Zhao F."/>
            <person name="Overmann J."/>
            <person name="Bryant D.A."/>
            <person name="Richardson P."/>
        </authorList>
    </citation>
    <scope>NUCLEOTIDE SEQUENCE [LARGE SCALE GENOMIC DNA]</scope>
    <source>
        <strain>DSM 271 / SK 413</strain>
    </source>
</reference>
<accession>B4S8L6</accession>
<organism>
    <name type="scientific">Prosthecochloris aestuarii (strain DSM 271 / SK 413)</name>
    <dbReference type="NCBI Taxonomy" id="290512"/>
    <lineage>
        <taxon>Bacteria</taxon>
        <taxon>Pseudomonadati</taxon>
        <taxon>Chlorobiota</taxon>
        <taxon>Chlorobiia</taxon>
        <taxon>Chlorobiales</taxon>
        <taxon>Chlorobiaceae</taxon>
        <taxon>Prosthecochloris</taxon>
    </lineage>
</organism>
<sequence>MAHDFSGLLNPSLLKMSAYSVEGGQQAEIKLNQNESPFDLPLWLKDEIMDEFKHEAWNRYPDILPFRGMKAYADFLGIAPESVMMSNGSNEMLYTIFLACLSKGRKVVIPEPSFSLYEKLAVLLQADIVDVPMHDDLTFDVDAIIARTNQERAGFVVLSTPNNPTSQSLRLDDVRRIVSGVEALVLVDEAYVEFSREESALTLIDEFPNLIILRTMSKALALAGMRIGFAITNPQLLSEIAKPKIPFTSGRLAEITLQHVLRHYSLVDDAVAYILRERNRLLGELSSVSAIHTFPSDANFIIIRVDDARHVFHALQDEGILVRNVSGYRLMENCLRFNIGLETENDLLLEKLHRMKG</sequence>
<proteinExistence type="inferred from homology"/>
<comment type="catalytic activity">
    <reaction evidence="1">
        <text>L-histidinol phosphate + 2-oxoglutarate = 3-(imidazol-4-yl)-2-oxopropyl phosphate + L-glutamate</text>
        <dbReference type="Rhea" id="RHEA:23744"/>
        <dbReference type="ChEBI" id="CHEBI:16810"/>
        <dbReference type="ChEBI" id="CHEBI:29985"/>
        <dbReference type="ChEBI" id="CHEBI:57766"/>
        <dbReference type="ChEBI" id="CHEBI:57980"/>
        <dbReference type="EC" id="2.6.1.9"/>
    </reaction>
</comment>
<comment type="cofactor">
    <cofactor evidence="1">
        <name>pyridoxal 5'-phosphate</name>
        <dbReference type="ChEBI" id="CHEBI:597326"/>
    </cofactor>
</comment>
<comment type="pathway">
    <text evidence="1">Amino-acid biosynthesis; L-histidine biosynthesis; L-histidine from 5-phospho-alpha-D-ribose 1-diphosphate: step 7/9.</text>
</comment>
<comment type="subunit">
    <text evidence="1">Homodimer.</text>
</comment>
<comment type="similarity">
    <text evidence="1">Belongs to the class-II pyridoxal-phosphate-dependent aminotransferase family. Histidinol-phosphate aminotransferase subfamily.</text>
</comment>
<feature type="chain" id="PRO_1000149109" description="Histidinol-phosphate aminotransferase">
    <location>
        <begin position="1"/>
        <end position="357"/>
    </location>
</feature>
<feature type="modified residue" description="N6-(pyridoxal phosphate)lysine" evidence="1">
    <location>
        <position position="218"/>
    </location>
</feature>
<gene>
    <name evidence="1" type="primary">hisC</name>
    <name type="ordered locus">Paes_1382</name>
</gene>
<keyword id="KW-0028">Amino-acid biosynthesis</keyword>
<keyword id="KW-0032">Aminotransferase</keyword>
<keyword id="KW-0368">Histidine biosynthesis</keyword>
<keyword id="KW-0663">Pyridoxal phosphate</keyword>
<keyword id="KW-0808">Transferase</keyword>
<protein>
    <recommendedName>
        <fullName evidence="1">Histidinol-phosphate aminotransferase</fullName>
        <ecNumber evidence="1">2.6.1.9</ecNumber>
    </recommendedName>
    <alternativeName>
        <fullName evidence="1">Imidazole acetol-phosphate transaminase</fullName>
    </alternativeName>
</protein>
<dbReference type="EC" id="2.6.1.9" evidence="1"/>
<dbReference type="EMBL" id="CP001108">
    <property type="protein sequence ID" value="ACF46403.1"/>
    <property type="molecule type" value="Genomic_DNA"/>
</dbReference>
<dbReference type="RefSeq" id="WP_012505937.1">
    <property type="nucleotide sequence ID" value="NC_011059.1"/>
</dbReference>
<dbReference type="SMR" id="B4S8L6"/>
<dbReference type="STRING" id="290512.Paes_1382"/>
<dbReference type="KEGG" id="paa:Paes_1382"/>
<dbReference type="eggNOG" id="COG0079">
    <property type="taxonomic scope" value="Bacteria"/>
</dbReference>
<dbReference type="HOGENOM" id="CLU_017584_3_1_10"/>
<dbReference type="UniPathway" id="UPA00031">
    <property type="reaction ID" value="UER00012"/>
</dbReference>
<dbReference type="Proteomes" id="UP000002725">
    <property type="component" value="Chromosome"/>
</dbReference>
<dbReference type="GO" id="GO:0004400">
    <property type="term" value="F:histidinol-phosphate transaminase activity"/>
    <property type="evidence" value="ECO:0007669"/>
    <property type="project" value="UniProtKB-UniRule"/>
</dbReference>
<dbReference type="GO" id="GO:0030170">
    <property type="term" value="F:pyridoxal phosphate binding"/>
    <property type="evidence" value="ECO:0007669"/>
    <property type="project" value="InterPro"/>
</dbReference>
<dbReference type="GO" id="GO:0000105">
    <property type="term" value="P:L-histidine biosynthetic process"/>
    <property type="evidence" value="ECO:0007669"/>
    <property type="project" value="UniProtKB-UniRule"/>
</dbReference>
<dbReference type="CDD" id="cd00609">
    <property type="entry name" value="AAT_like"/>
    <property type="match status" value="1"/>
</dbReference>
<dbReference type="Gene3D" id="3.90.1150.10">
    <property type="entry name" value="Aspartate Aminotransferase, domain 1"/>
    <property type="match status" value="1"/>
</dbReference>
<dbReference type="Gene3D" id="3.40.640.10">
    <property type="entry name" value="Type I PLP-dependent aspartate aminotransferase-like (Major domain)"/>
    <property type="match status" value="1"/>
</dbReference>
<dbReference type="HAMAP" id="MF_01023">
    <property type="entry name" value="HisC_aminotrans_2"/>
    <property type="match status" value="1"/>
</dbReference>
<dbReference type="InterPro" id="IPR001917">
    <property type="entry name" value="Aminotrans_II_pyridoxalP_BS"/>
</dbReference>
<dbReference type="InterPro" id="IPR004839">
    <property type="entry name" value="Aminotransferase_I/II_large"/>
</dbReference>
<dbReference type="InterPro" id="IPR005861">
    <property type="entry name" value="HisP_aminotrans"/>
</dbReference>
<dbReference type="InterPro" id="IPR050106">
    <property type="entry name" value="HistidinolP_aminotransfase"/>
</dbReference>
<dbReference type="InterPro" id="IPR015424">
    <property type="entry name" value="PyrdxlP-dep_Trfase"/>
</dbReference>
<dbReference type="InterPro" id="IPR015421">
    <property type="entry name" value="PyrdxlP-dep_Trfase_major"/>
</dbReference>
<dbReference type="InterPro" id="IPR015422">
    <property type="entry name" value="PyrdxlP-dep_Trfase_small"/>
</dbReference>
<dbReference type="NCBIfam" id="TIGR01141">
    <property type="entry name" value="hisC"/>
    <property type="match status" value="1"/>
</dbReference>
<dbReference type="PANTHER" id="PTHR43643:SF6">
    <property type="entry name" value="HISTIDINOL-PHOSPHATE AMINOTRANSFERASE"/>
    <property type="match status" value="1"/>
</dbReference>
<dbReference type="PANTHER" id="PTHR43643">
    <property type="entry name" value="HISTIDINOL-PHOSPHATE AMINOTRANSFERASE 2"/>
    <property type="match status" value="1"/>
</dbReference>
<dbReference type="Pfam" id="PF00155">
    <property type="entry name" value="Aminotran_1_2"/>
    <property type="match status" value="1"/>
</dbReference>
<dbReference type="SUPFAM" id="SSF53383">
    <property type="entry name" value="PLP-dependent transferases"/>
    <property type="match status" value="1"/>
</dbReference>
<dbReference type="PROSITE" id="PS00599">
    <property type="entry name" value="AA_TRANSFER_CLASS_2"/>
    <property type="match status" value="1"/>
</dbReference>
<name>HIS8_PROA2</name>